<feature type="signal peptide" evidence="1">
    <location>
        <begin position="1"/>
        <end position="19"/>
    </location>
</feature>
<feature type="chain" id="PRO_0000314413" description="D-(-)-3-hydroxybutyrate oligomer hydrolase">
    <location>
        <begin position="20"/>
        <end position="699"/>
    </location>
</feature>
<feature type="active site" description="Charge relay system" evidence="1">
    <location>
        <position position="303"/>
    </location>
</feature>
<organism>
    <name type="scientific">Azoarcus sp. (strain BH72)</name>
    <dbReference type="NCBI Taxonomy" id="418699"/>
    <lineage>
        <taxon>Bacteria</taxon>
        <taxon>Pseudomonadati</taxon>
        <taxon>Pseudomonadota</taxon>
        <taxon>Betaproteobacteria</taxon>
        <taxon>Rhodocyclales</taxon>
        <taxon>Zoogloeaceae</taxon>
        <taxon>Azoarcus</taxon>
    </lineage>
</organism>
<sequence length="699" mass="72794">MNPSLCIAVAFACPLSALAASGAPGVGFNEKPSFLGEIVQRSVDGVSDDLLTAGLGRDGIQSATPPLVSASPTATELRRLAIYNNYRALVDTTSGGGFGSLFGPLIAVDAGGRVSAPGDGKIAGTEYLAYAIDRGDDSKVTLMVQVPAHFNPKAPCIVTGTSSGSRGIYGAIGTSGEWGLQKGCAVAYADKGTGNGMHDLDTNTVGLIDGTRADAVAAGVASHFTADLTEAERTQFLASWPHRVAVKHAHSRANPEAHWGQDTLDAVRFAFFVLNETYGRRTPRGIVRTILPPNTVVIASSVSNGGGAALAAAEQDDERLIDGVAVGEPQIQLRENDAVRVVRGSQVRTGTGRPLYDYTTFANLLQPCAVLSPRAAGSPGEAFIPAALAANRCEALAAHEFITGNTPAERGDSALDALVAYGWEPESTPLTASHYAFAVPPIALTYANAYGRFGVEERVCNYSFAATDAAGTPIAWPAASAATSFGTGNGIPPAAGLQIINDASLGGPRRDGASISPSTGKLDFNVDGALCLRQLWTGGGASAREVHESVDEVQVSAQLQGRPAIIVHGRADALVPVGFTSRPYLGLNSLAEHGRSRLRYVEVTNAQHFDAFIGTATLPGYDTRFVPLHVYFRQALDLMYSHLTARTPLPPSQLVRTTPRAGTPGAAVAITAANVPPIRMKPAAADLITVRRGEVVVPD</sequence>
<proteinExistence type="inferred from homology"/>
<gene>
    <name type="ordered locus">azo3634</name>
</gene>
<keyword id="KW-0378">Hydrolase</keyword>
<keyword id="KW-1185">Reference proteome</keyword>
<keyword id="KW-0964">Secreted</keyword>
<keyword id="KW-0732">Signal</keyword>
<name>HBOH_AZOSB</name>
<comment type="function">
    <text evidence="1">Participates in the degradation of poly-3-hydroxybutyrate (PHB). It works downstream of poly(3-hydroxybutyrate) depolymerase, hydrolyzing D(-)-3-hydroxybutyrate oligomers of various length (3HB-oligomers) into 3HB-monomers.</text>
</comment>
<comment type="catalytic activity">
    <reaction evidence="1">
        <text>(3R)-hydroxybutanoate dimer + H2O = 2 (R)-3-hydroxybutanoate + H(+)</text>
        <dbReference type="Rhea" id="RHEA:10172"/>
        <dbReference type="ChEBI" id="CHEBI:10979"/>
        <dbReference type="ChEBI" id="CHEBI:10983"/>
        <dbReference type="ChEBI" id="CHEBI:15377"/>
        <dbReference type="ChEBI" id="CHEBI:15378"/>
        <dbReference type="EC" id="3.1.1.22"/>
    </reaction>
</comment>
<comment type="pathway">
    <text evidence="1">Lipid metabolism; butanoate metabolism.</text>
</comment>
<comment type="subcellular location">
    <subcellularLocation>
        <location evidence="1">Secreted</location>
    </subcellularLocation>
</comment>
<comment type="similarity">
    <text evidence="1">Belongs to the D-(-)-3-hydroxybutyrate oligomer hydrolase family.</text>
</comment>
<reference key="1">
    <citation type="journal article" date="2006" name="Nat. Biotechnol.">
        <title>Complete genome of the mutualistic, N2-fixing grass endophyte Azoarcus sp. strain BH72.</title>
        <authorList>
            <person name="Krause A."/>
            <person name="Ramakumar A."/>
            <person name="Bartels D."/>
            <person name="Battistoni F."/>
            <person name="Bekel T."/>
            <person name="Boch J."/>
            <person name="Boehm M."/>
            <person name="Friedrich F."/>
            <person name="Hurek T."/>
            <person name="Krause L."/>
            <person name="Linke B."/>
            <person name="McHardy A.C."/>
            <person name="Sarkar A."/>
            <person name="Schneiker S."/>
            <person name="Syed A.A."/>
            <person name="Thauer R."/>
            <person name="Vorhoelter F.-J."/>
            <person name="Weidner S."/>
            <person name="Puehler A."/>
            <person name="Reinhold-Hurek B."/>
            <person name="Kaiser O."/>
            <person name="Goesmann A."/>
        </authorList>
    </citation>
    <scope>NUCLEOTIDE SEQUENCE [LARGE SCALE GENOMIC DNA]</scope>
    <source>
        <strain>BH72</strain>
    </source>
</reference>
<accession>A1KBP4</accession>
<evidence type="ECO:0000255" key="1">
    <source>
        <dbReference type="HAMAP-Rule" id="MF_01906"/>
    </source>
</evidence>
<protein>
    <recommendedName>
        <fullName evidence="1">D-(-)-3-hydroxybutyrate oligomer hydrolase</fullName>
        <shortName evidence="1">3HB-oligomer hydrolase</shortName>
        <shortName evidence="1">3HBOH</shortName>
        <ecNumber evidence="1">3.1.1.22</ecNumber>
    </recommendedName>
</protein>
<dbReference type="EC" id="3.1.1.22" evidence="1"/>
<dbReference type="EMBL" id="AM406670">
    <property type="protein sequence ID" value="CAL96250.1"/>
    <property type="molecule type" value="Genomic_DNA"/>
</dbReference>
<dbReference type="RefSeq" id="WP_011767356.1">
    <property type="nucleotide sequence ID" value="NC_008702.1"/>
</dbReference>
<dbReference type="STRING" id="62928.azo3634"/>
<dbReference type="ESTHER" id="azosb-hboh">
    <property type="family name" value="OHBut_olig_hydro_put"/>
</dbReference>
<dbReference type="KEGG" id="azo:azo3634"/>
<dbReference type="eggNOG" id="ENOG502Z8QU">
    <property type="taxonomic scope" value="Bacteria"/>
</dbReference>
<dbReference type="HOGENOM" id="CLU_420258_0_0_4"/>
<dbReference type="UniPathway" id="UPA00863"/>
<dbReference type="Proteomes" id="UP000002588">
    <property type="component" value="Chromosome"/>
</dbReference>
<dbReference type="GO" id="GO:0005615">
    <property type="term" value="C:extracellular space"/>
    <property type="evidence" value="ECO:0007669"/>
    <property type="project" value="InterPro"/>
</dbReference>
<dbReference type="GO" id="GO:0047989">
    <property type="term" value="F:hydroxybutyrate-dimer hydrolase activity"/>
    <property type="evidence" value="ECO:0007669"/>
    <property type="project" value="UniProtKB-UniRule"/>
</dbReference>
<dbReference type="GO" id="GO:0019605">
    <property type="term" value="P:butyrate metabolic process"/>
    <property type="evidence" value="ECO:0007669"/>
    <property type="project" value="UniProtKB-UniRule"/>
</dbReference>
<dbReference type="HAMAP" id="MF_01906">
    <property type="entry name" value="3HBOH"/>
    <property type="match status" value="1"/>
</dbReference>
<dbReference type="InterPro" id="IPR029058">
    <property type="entry name" value="AB_hydrolase_fold"/>
</dbReference>
<dbReference type="InterPro" id="IPR016582">
    <property type="entry name" value="OHBut_olig_hydro_put"/>
</dbReference>
<dbReference type="Pfam" id="PF10605">
    <property type="entry name" value="3HBOH"/>
    <property type="match status" value="1"/>
</dbReference>
<dbReference type="PIRSF" id="PIRSF011409">
    <property type="entry name" value="HObutyrate_olig_hydrol"/>
    <property type="match status" value="1"/>
</dbReference>
<dbReference type="SUPFAM" id="SSF53474">
    <property type="entry name" value="alpha/beta-Hydrolases"/>
    <property type="match status" value="1"/>
</dbReference>